<organism>
    <name type="scientific">Shigella boydii serotype 4 (strain Sb227)</name>
    <dbReference type="NCBI Taxonomy" id="300268"/>
    <lineage>
        <taxon>Bacteria</taxon>
        <taxon>Pseudomonadati</taxon>
        <taxon>Pseudomonadota</taxon>
        <taxon>Gammaproteobacteria</taxon>
        <taxon>Enterobacterales</taxon>
        <taxon>Enterobacteriaceae</taxon>
        <taxon>Shigella</taxon>
    </lineage>
</organism>
<accession>Q31TC2</accession>
<comment type="function">
    <text evidence="1">Represses ulaG and the ulaABCDEF operon.</text>
</comment>
<comment type="subcellular location">
    <subcellularLocation>
        <location evidence="1">Cytoplasm</location>
    </subcellularLocation>
</comment>
<proteinExistence type="inferred from homology"/>
<keyword id="KW-0963">Cytoplasm</keyword>
<keyword id="KW-0238">DNA-binding</keyword>
<keyword id="KW-0678">Repressor</keyword>
<keyword id="KW-0804">Transcription</keyword>
<keyword id="KW-0805">Transcription regulation</keyword>
<feature type="chain" id="PRO_0000234026" description="HTH-type transcriptional regulator UlaR">
    <location>
        <begin position="1"/>
        <end position="251"/>
    </location>
</feature>
<feature type="domain" description="HTH deoR-type" evidence="1">
    <location>
        <begin position="3"/>
        <end position="58"/>
    </location>
</feature>
<feature type="DNA-binding region" description="H-T-H motif" evidence="1">
    <location>
        <begin position="20"/>
        <end position="39"/>
    </location>
</feature>
<gene>
    <name evidence="1" type="primary">ulaR</name>
    <name type="ordered locus">SBO_4264</name>
</gene>
<protein>
    <recommendedName>
        <fullName evidence="1">HTH-type transcriptional regulator UlaR</fullName>
    </recommendedName>
</protein>
<name>ULAR_SHIBS</name>
<dbReference type="EMBL" id="CP000036">
    <property type="protein sequence ID" value="ABB68686.1"/>
    <property type="molecule type" value="Genomic_DNA"/>
</dbReference>
<dbReference type="RefSeq" id="WP_000133631.1">
    <property type="nucleotide sequence ID" value="NC_007613.1"/>
</dbReference>
<dbReference type="SMR" id="Q31TC2"/>
<dbReference type="GeneID" id="75202425"/>
<dbReference type="KEGG" id="sbo:SBO_4264"/>
<dbReference type="HOGENOM" id="CLU_060699_3_2_6"/>
<dbReference type="Proteomes" id="UP000007067">
    <property type="component" value="Chromosome"/>
</dbReference>
<dbReference type="GO" id="GO:0005737">
    <property type="term" value="C:cytoplasm"/>
    <property type="evidence" value="ECO:0007669"/>
    <property type="project" value="UniProtKB-SubCell"/>
</dbReference>
<dbReference type="GO" id="GO:0003677">
    <property type="term" value="F:DNA binding"/>
    <property type="evidence" value="ECO:0007669"/>
    <property type="project" value="UniProtKB-KW"/>
</dbReference>
<dbReference type="GO" id="GO:0003700">
    <property type="term" value="F:DNA-binding transcription factor activity"/>
    <property type="evidence" value="ECO:0007669"/>
    <property type="project" value="InterPro"/>
</dbReference>
<dbReference type="GO" id="GO:0045892">
    <property type="term" value="P:negative regulation of DNA-templated transcription"/>
    <property type="evidence" value="ECO:0007669"/>
    <property type="project" value="UniProtKB-UniRule"/>
</dbReference>
<dbReference type="FunFam" id="1.10.10.10:FF:000160">
    <property type="entry name" value="HTH-type transcriptional regulator UlaR"/>
    <property type="match status" value="1"/>
</dbReference>
<dbReference type="Gene3D" id="1.10.10.10">
    <property type="entry name" value="Winged helix-like DNA-binding domain superfamily/Winged helix DNA-binding domain"/>
    <property type="match status" value="1"/>
</dbReference>
<dbReference type="HAMAP" id="MF_01563">
    <property type="entry name" value="HTH_type_UlaR"/>
    <property type="match status" value="1"/>
</dbReference>
<dbReference type="InterPro" id="IPR050313">
    <property type="entry name" value="Carb_Metab_HTH_regulators"/>
</dbReference>
<dbReference type="InterPro" id="IPR014036">
    <property type="entry name" value="DeoR-like_C"/>
</dbReference>
<dbReference type="InterPro" id="IPR001034">
    <property type="entry name" value="DeoR_HTH"/>
</dbReference>
<dbReference type="InterPro" id="IPR037171">
    <property type="entry name" value="NagB/RpiA_transferase-like"/>
</dbReference>
<dbReference type="InterPro" id="IPR018356">
    <property type="entry name" value="Tscrpt_reg_HTH_DeoR_CS"/>
</dbReference>
<dbReference type="InterPro" id="IPR023711">
    <property type="entry name" value="Tscrpt_reg_HTH_UlaR"/>
</dbReference>
<dbReference type="InterPro" id="IPR036388">
    <property type="entry name" value="WH-like_DNA-bd_sf"/>
</dbReference>
<dbReference type="InterPro" id="IPR036390">
    <property type="entry name" value="WH_DNA-bd_sf"/>
</dbReference>
<dbReference type="NCBIfam" id="NF010034">
    <property type="entry name" value="PRK13509.1"/>
    <property type="match status" value="1"/>
</dbReference>
<dbReference type="PANTHER" id="PTHR30363">
    <property type="entry name" value="HTH-TYPE TRANSCRIPTIONAL REGULATOR SRLR-RELATED"/>
    <property type="match status" value="1"/>
</dbReference>
<dbReference type="PANTHER" id="PTHR30363:SF55">
    <property type="entry name" value="HTH-TYPE TRANSCRIPTIONAL REGULATOR ULAR"/>
    <property type="match status" value="1"/>
</dbReference>
<dbReference type="Pfam" id="PF00455">
    <property type="entry name" value="DeoRC"/>
    <property type="match status" value="1"/>
</dbReference>
<dbReference type="Pfam" id="PF08220">
    <property type="entry name" value="HTH_DeoR"/>
    <property type="match status" value="1"/>
</dbReference>
<dbReference type="PRINTS" id="PR00037">
    <property type="entry name" value="HTHLACR"/>
</dbReference>
<dbReference type="SMART" id="SM01134">
    <property type="entry name" value="DeoRC"/>
    <property type="match status" value="1"/>
</dbReference>
<dbReference type="SMART" id="SM00420">
    <property type="entry name" value="HTH_DEOR"/>
    <property type="match status" value="1"/>
</dbReference>
<dbReference type="SUPFAM" id="SSF100950">
    <property type="entry name" value="NagB/RpiA/CoA transferase-like"/>
    <property type="match status" value="1"/>
</dbReference>
<dbReference type="SUPFAM" id="SSF46785">
    <property type="entry name" value="Winged helix' DNA-binding domain"/>
    <property type="match status" value="1"/>
</dbReference>
<dbReference type="PROSITE" id="PS00894">
    <property type="entry name" value="HTH_DEOR_1"/>
    <property type="match status" value="1"/>
</dbReference>
<dbReference type="PROSITE" id="PS51000">
    <property type="entry name" value="HTH_DEOR_2"/>
    <property type="match status" value="1"/>
</dbReference>
<reference key="1">
    <citation type="journal article" date="2005" name="Nucleic Acids Res.">
        <title>Genome dynamics and diversity of Shigella species, the etiologic agents of bacillary dysentery.</title>
        <authorList>
            <person name="Yang F."/>
            <person name="Yang J."/>
            <person name="Zhang X."/>
            <person name="Chen L."/>
            <person name="Jiang Y."/>
            <person name="Yan Y."/>
            <person name="Tang X."/>
            <person name="Wang J."/>
            <person name="Xiong Z."/>
            <person name="Dong J."/>
            <person name="Xue Y."/>
            <person name="Zhu Y."/>
            <person name="Xu X."/>
            <person name="Sun L."/>
            <person name="Chen S."/>
            <person name="Nie H."/>
            <person name="Peng J."/>
            <person name="Xu J."/>
            <person name="Wang Y."/>
            <person name="Yuan Z."/>
            <person name="Wen Y."/>
            <person name="Yao Z."/>
            <person name="Shen Y."/>
            <person name="Qiang B."/>
            <person name="Hou Y."/>
            <person name="Yu J."/>
            <person name="Jin Q."/>
        </authorList>
    </citation>
    <scope>NUCLEOTIDE SEQUENCE [LARGE SCALE GENOMIC DNA]</scope>
    <source>
        <strain>Sb227</strain>
    </source>
</reference>
<sequence length="251" mass="27602">MTEAQRHQILLEMLAQLGFVTVEKVVERLGISPATARRDINKLDESGKLKKVRNGAEAITQQRPRWTPMNLHQAQNHDEKVRIAKAASQLVNPGESVVINCGSTAFLLGREMCGKPVQIITNYLPLANYLIDQEHDSVIIMGGQYNKSQSITLSPQGSENSLYAGHWMFTSGKGLTAEGLYKTDMLTAMAEQKMLSVVGKLVVLVDSSKIGERAGMLFSRADQIDMLITGKNANPEILQQLEAQGVSILRV</sequence>
<evidence type="ECO:0000255" key="1">
    <source>
        <dbReference type="HAMAP-Rule" id="MF_01563"/>
    </source>
</evidence>